<sequence length="71" mass="8514">MPVIKVRENEPFDVALRRFKRSCEKAGILAEVRRREFYEKPTTERKRAKASAVKRHAKKLARENARRTRLY</sequence>
<reference key="1">
    <citation type="submission" date="2009-03" db="EMBL/GenBank/DDBJ databases">
        <title>Complete genome sequence of Edwardsiella ictaluri 93-146.</title>
        <authorList>
            <person name="Williams M.L."/>
            <person name="Gillaspy A.F."/>
            <person name="Dyer D.W."/>
            <person name="Thune R.L."/>
            <person name="Waldbieser G.C."/>
            <person name="Schuster S.C."/>
            <person name="Gipson J."/>
            <person name="Zaitshik J."/>
            <person name="Landry C."/>
            <person name="Lawrence M.L."/>
        </authorList>
    </citation>
    <scope>NUCLEOTIDE SEQUENCE [LARGE SCALE GENOMIC DNA]</scope>
    <source>
        <strain>93-146</strain>
    </source>
</reference>
<proteinExistence type="inferred from homology"/>
<keyword id="KW-0687">Ribonucleoprotein</keyword>
<keyword id="KW-0689">Ribosomal protein</keyword>
<organism>
    <name type="scientific">Edwardsiella ictaluri (strain 93-146)</name>
    <dbReference type="NCBI Taxonomy" id="634503"/>
    <lineage>
        <taxon>Bacteria</taxon>
        <taxon>Pseudomonadati</taxon>
        <taxon>Pseudomonadota</taxon>
        <taxon>Gammaproteobacteria</taxon>
        <taxon>Enterobacterales</taxon>
        <taxon>Hafniaceae</taxon>
        <taxon>Edwardsiella</taxon>
    </lineage>
</organism>
<gene>
    <name evidence="1" type="primary">rpsU</name>
    <name type="ordered locus">NT01EI_0526</name>
</gene>
<protein>
    <recommendedName>
        <fullName evidence="1">Small ribosomal subunit protein bS21</fullName>
    </recommendedName>
    <alternativeName>
        <fullName evidence="3">30S ribosomal protein S21</fullName>
    </alternativeName>
</protein>
<evidence type="ECO:0000255" key="1">
    <source>
        <dbReference type="HAMAP-Rule" id="MF_00358"/>
    </source>
</evidence>
<evidence type="ECO:0000256" key="2">
    <source>
        <dbReference type="SAM" id="MobiDB-lite"/>
    </source>
</evidence>
<evidence type="ECO:0000305" key="3"/>
<feature type="chain" id="PRO_1000205366" description="Small ribosomal subunit protein bS21">
    <location>
        <begin position="1"/>
        <end position="71"/>
    </location>
</feature>
<feature type="region of interest" description="Disordered" evidence="2">
    <location>
        <begin position="43"/>
        <end position="71"/>
    </location>
</feature>
<feature type="compositionally biased region" description="Basic residues" evidence="2">
    <location>
        <begin position="46"/>
        <end position="59"/>
    </location>
</feature>
<feature type="compositionally biased region" description="Basic and acidic residues" evidence="2">
    <location>
        <begin position="60"/>
        <end position="71"/>
    </location>
</feature>
<dbReference type="EMBL" id="CP001600">
    <property type="protein sequence ID" value="ACR67759.1"/>
    <property type="molecule type" value="Genomic_DNA"/>
</dbReference>
<dbReference type="RefSeq" id="WP_005295814.1">
    <property type="nucleotide sequence ID" value="NZ_CP169062.1"/>
</dbReference>
<dbReference type="SMR" id="C5BHG0"/>
<dbReference type="STRING" id="67780.B6E78_13355"/>
<dbReference type="GeneID" id="93122906"/>
<dbReference type="KEGG" id="eic:NT01EI_0526"/>
<dbReference type="HOGENOM" id="CLU_159258_1_0_6"/>
<dbReference type="OrthoDB" id="9799244at2"/>
<dbReference type="Proteomes" id="UP000001485">
    <property type="component" value="Chromosome"/>
</dbReference>
<dbReference type="GO" id="GO:1990904">
    <property type="term" value="C:ribonucleoprotein complex"/>
    <property type="evidence" value="ECO:0007669"/>
    <property type="project" value="UniProtKB-KW"/>
</dbReference>
<dbReference type="GO" id="GO:0005840">
    <property type="term" value="C:ribosome"/>
    <property type="evidence" value="ECO:0007669"/>
    <property type="project" value="UniProtKB-KW"/>
</dbReference>
<dbReference type="GO" id="GO:0003735">
    <property type="term" value="F:structural constituent of ribosome"/>
    <property type="evidence" value="ECO:0007669"/>
    <property type="project" value="InterPro"/>
</dbReference>
<dbReference type="GO" id="GO:0006412">
    <property type="term" value="P:translation"/>
    <property type="evidence" value="ECO:0007669"/>
    <property type="project" value="UniProtKB-UniRule"/>
</dbReference>
<dbReference type="FunFam" id="1.20.5.1150:FF:000001">
    <property type="entry name" value="30S ribosomal protein S21"/>
    <property type="match status" value="1"/>
</dbReference>
<dbReference type="Gene3D" id="1.20.5.1150">
    <property type="entry name" value="Ribosomal protein S8"/>
    <property type="match status" value="1"/>
</dbReference>
<dbReference type="HAMAP" id="MF_00358">
    <property type="entry name" value="Ribosomal_bS21"/>
    <property type="match status" value="1"/>
</dbReference>
<dbReference type="InterPro" id="IPR001911">
    <property type="entry name" value="Ribosomal_bS21"/>
</dbReference>
<dbReference type="InterPro" id="IPR018278">
    <property type="entry name" value="Ribosomal_bS21_CS"/>
</dbReference>
<dbReference type="InterPro" id="IPR038380">
    <property type="entry name" value="Ribosomal_bS21_sf"/>
</dbReference>
<dbReference type="NCBIfam" id="TIGR00030">
    <property type="entry name" value="S21p"/>
    <property type="match status" value="1"/>
</dbReference>
<dbReference type="PANTHER" id="PTHR21109">
    <property type="entry name" value="MITOCHONDRIAL 28S RIBOSOMAL PROTEIN S21"/>
    <property type="match status" value="1"/>
</dbReference>
<dbReference type="PANTHER" id="PTHR21109:SF22">
    <property type="entry name" value="SMALL RIBOSOMAL SUBUNIT PROTEIN BS21"/>
    <property type="match status" value="1"/>
</dbReference>
<dbReference type="Pfam" id="PF01165">
    <property type="entry name" value="Ribosomal_S21"/>
    <property type="match status" value="1"/>
</dbReference>
<dbReference type="PRINTS" id="PR00976">
    <property type="entry name" value="RIBOSOMALS21"/>
</dbReference>
<dbReference type="PROSITE" id="PS01181">
    <property type="entry name" value="RIBOSOMAL_S21"/>
    <property type="match status" value="1"/>
</dbReference>
<accession>C5BHG0</accession>
<name>RS21_EDWI9</name>
<comment type="similarity">
    <text evidence="1">Belongs to the bacterial ribosomal protein bS21 family.</text>
</comment>